<organism>
    <name type="scientific">Rickettsia africae (strain ESF-5)</name>
    <dbReference type="NCBI Taxonomy" id="347255"/>
    <lineage>
        <taxon>Bacteria</taxon>
        <taxon>Pseudomonadati</taxon>
        <taxon>Pseudomonadota</taxon>
        <taxon>Alphaproteobacteria</taxon>
        <taxon>Rickettsiales</taxon>
        <taxon>Rickettsiaceae</taxon>
        <taxon>Rickettsieae</taxon>
        <taxon>Rickettsia</taxon>
        <taxon>spotted fever group</taxon>
    </lineage>
</organism>
<accession>C3PPA4</accession>
<keyword id="KW-0687">Ribonucleoprotein</keyword>
<keyword id="KW-0689">Ribosomal protein</keyword>
<keyword id="KW-0694">RNA-binding</keyword>
<keyword id="KW-0699">rRNA-binding</keyword>
<protein>
    <recommendedName>
        <fullName evidence="1">Large ribosomal subunit protein uL2</fullName>
    </recommendedName>
    <alternativeName>
        <fullName evidence="3">50S ribosomal protein L2</fullName>
    </alternativeName>
</protein>
<dbReference type="EMBL" id="CP001612">
    <property type="protein sequence ID" value="ACP53764.1"/>
    <property type="molecule type" value="Genomic_DNA"/>
</dbReference>
<dbReference type="RefSeq" id="WP_004997791.1">
    <property type="nucleotide sequence ID" value="NC_012633.1"/>
</dbReference>
<dbReference type="SMR" id="C3PPA4"/>
<dbReference type="GeneID" id="95361483"/>
<dbReference type="KEGG" id="raf:RAF_ORF0909"/>
<dbReference type="HOGENOM" id="CLU_036235_2_1_5"/>
<dbReference type="Proteomes" id="UP000002305">
    <property type="component" value="Chromosome"/>
</dbReference>
<dbReference type="GO" id="GO:0015934">
    <property type="term" value="C:large ribosomal subunit"/>
    <property type="evidence" value="ECO:0007669"/>
    <property type="project" value="InterPro"/>
</dbReference>
<dbReference type="GO" id="GO:0019843">
    <property type="term" value="F:rRNA binding"/>
    <property type="evidence" value="ECO:0007669"/>
    <property type="project" value="UniProtKB-UniRule"/>
</dbReference>
<dbReference type="GO" id="GO:0003735">
    <property type="term" value="F:structural constituent of ribosome"/>
    <property type="evidence" value="ECO:0007669"/>
    <property type="project" value="InterPro"/>
</dbReference>
<dbReference type="GO" id="GO:0016740">
    <property type="term" value="F:transferase activity"/>
    <property type="evidence" value="ECO:0007669"/>
    <property type="project" value="InterPro"/>
</dbReference>
<dbReference type="GO" id="GO:0006412">
    <property type="term" value="P:translation"/>
    <property type="evidence" value="ECO:0007669"/>
    <property type="project" value="UniProtKB-UniRule"/>
</dbReference>
<dbReference type="FunFam" id="2.30.30.30:FF:000001">
    <property type="entry name" value="50S ribosomal protein L2"/>
    <property type="match status" value="1"/>
</dbReference>
<dbReference type="FunFam" id="2.40.50.140:FF:000003">
    <property type="entry name" value="50S ribosomal protein L2"/>
    <property type="match status" value="1"/>
</dbReference>
<dbReference type="FunFam" id="4.10.950.10:FF:000001">
    <property type="entry name" value="50S ribosomal protein L2"/>
    <property type="match status" value="1"/>
</dbReference>
<dbReference type="Gene3D" id="2.30.30.30">
    <property type="match status" value="1"/>
</dbReference>
<dbReference type="Gene3D" id="2.40.50.140">
    <property type="entry name" value="Nucleic acid-binding proteins"/>
    <property type="match status" value="1"/>
</dbReference>
<dbReference type="Gene3D" id="4.10.950.10">
    <property type="entry name" value="Ribosomal protein L2, domain 3"/>
    <property type="match status" value="1"/>
</dbReference>
<dbReference type="HAMAP" id="MF_01320_B">
    <property type="entry name" value="Ribosomal_uL2_B"/>
    <property type="match status" value="1"/>
</dbReference>
<dbReference type="InterPro" id="IPR012340">
    <property type="entry name" value="NA-bd_OB-fold"/>
</dbReference>
<dbReference type="InterPro" id="IPR014722">
    <property type="entry name" value="Rib_uL2_dom2"/>
</dbReference>
<dbReference type="InterPro" id="IPR002171">
    <property type="entry name" value="Ribosomal_uL2"/>
</dbReference>
<dbReference type="InterPro" id="IPR005880">
    <property type="entry name" value="Ribosomal_uL2_bac/org-type"/>
</dbReference>
<dbReference type="InterPro" id="IPR022669">
    <property type="entry name" value="Ribosomal_uL2_C"/>
</dbReference>
<dbReference type="InterPro" id="IPR022671">
    <property type="entry name" value="Ribosomal_uL2_CS"/>
</dbReference>
<dbReference type="InterPro" id="IPR014726">
    <property type="entry name" value="Ribosomal_uL2_dom3"/>
</dbReference>
<dbReference type="InterPro" id="IPR022666">
    <property type="entry name" value="Ribosomal_uL2_RNA-bd_dom"/>
</dbReference>
<dbReference type="InterPro" id="IPR008991">
    <property type="entry name" value="Translation_prot_SH3-like_sf"/>
</dbReference>
<dbReference type="NCBIfam" id="TIGR01171">
    <property type="entry name" value="rplB_bact"/>
    <property type="match status" value="1"/>
</dbReference>
<dbReference type="PANTHER" id="PTHR13691:SF5">
    <property type="entry name" value="LARGE RIBOSOMAL SUBUNIT PROTEIN UL2M"/>
    <property type="match status" value="1"/>
</dbReference>
<dbReference type="PANTHER" id="PTHR13691">
    <property type="entry name" value="RIBOSOMAL PROTEIN L2"/>
    <property type="match status" value="1"/>
</dbReference>
<dbReference type="Pfam" id="PF00181">
    <property type="entry name" value="Ribosomal_L2"/>
    <property type="match status" value="1"/>
</dbReference>
<dbReference type="Pfam" id="PF03947">
    <property type="entry name" value="Ribosomal_L2_C"/>
    <property type="match status" value="1"/>
</dbReference>
<dbReference type="PIRSF" id="PIRSF002158">
    <property type="entry name" value="Ribosomal_L2"/>
    <property type="match status" value="1"/>
</dbReference>
<dbReference type="SMART" id="SM01383">
    <property type="entry name" value="Ribosomal_L2"/>
    <property type="match status" value="1"/>
</dbReference>
<dbReference type="SMART" id="SM01382">
    <property type="entry name" value="Ribosomal_L2_C"/>
    <property type="match status" value="1"/>
</dbReference>
<dbReference type="SUPFAM" id="SSF50249">
    <property type="entry name" value="Nucleic acid-binding proteins"/>
    <property type="match status" value="1"/>
</dbReference>
<dbReference type="SUPFAM" id="SSF50104">
    <property type="entry name" value="Translation proteins SH3-like domain"/>
    <property type="match status" value="1"/>
</dbReference>
<dbReference type="PROSITE" id="PS00467">
    <property type="entry name" value="RIBOSOMAL_L2"/>
    <property type="match status" value="1"/>
</dbReference>
<sequence>MALKNFNPITPSLRELVQVDKTSLWKGRPLKSLTKGISKTGGRNNQGRITSWHRGGGHKKLYRIIDFKRNKIDISAIVERIEYDPNRTAFIALIKYEDGEYSYILAPQKLSVGDRVISSQDADIKIGNCLPLKCIPIGTTLHNVEMKVGKGGQIARSAGTSVDLVGKDSGYAQIKLRSGEFRLVPLDCKATIGSISNPDQKNINLGKAGRNRWLGWRPHVRGVAMNPVDHPHGGGEGKTSGGRHPVTPWGFPTKGKKTRKNKRTSKFIVKKRK</sequence>
<proteinExistence type="inferred from homology"/>
<comment type="function">
    <text evidence="1">One of the primary rRNA binding proteins. Required for association of the 30S and 50S subunits to form the 70S ribosome, for tRNA binding and peptide bond formation. It has been suggested to have peptidyltransferase activity; this is somewhat controversial. Makes several contacts with the 16S rRNA in the 70S ribosome.</text>
</comment>
<comment type="subunit">
    <text evidence="1">Part of the 50S ribosomal subunit. Forms a bridge to the 30S subunit in the 70S ribosome.</text>
</comment>
<comment type="similarity">
    <text evidence="1">Belongs to the universal ribosomal protein uL2 family.</text>
</comment>
<name>RL2_RICAE</name>
<evidence type="ECO:0000255" key="1">
    <source>
        <dbReference type="HAMAP-Rule" id="MF_01320"/>
    </source>
</evidence>
<evidence type="ECO:0000256" key="2">
    <source>
        <dbReference type="SAM" id="MobiDB-lite"/>
    </source>
</evidence>
<evidence type="ECO:0000305" key="3"/>
<feature type="chain" id="PRO_1000214457" description="Large ribosomal subunit protein uL2">
    <location>
        <begin position="1"/>
        <end position="273"/>
    </location>
</feature>
<feature type="region of interest" description="Disordered" evidence="2">
    <location>
        <begin position="228"/>
        <end position="273"/>
    </location>
</feature>
<feature type="compositionally biased region" description="Basic residues" evidence="2">
    <location>
        <begin position="254"/>
        <end position="273"/>
    </location>
</feature>
<gene>
    <name evidence="1" type="primary">rplB</name>
    <name type="ordered locus">RAF_ORF0909</name>
</gene>
<reference key="1">
    <citation type="journal article" date="2009" name="BMC Genomics">
        <title>Analysis of the Rickettsia africae genome reveals that virulence acquisition in Rickettsia species may be explained by genome reduction.</title>
        <authorList>
            <person name="Fournier P.-E."/>
            <person name="El Karkouri K."/>
            <person name="Leroy Q."/>
            <person name="Robert C."/>
            <person name="Giumelli B."/>
            <person name="Renesto P."/>
            <person name="Socolovschi C."/>
            <person name="Parola P."/>
            <person name="Audic S."/>
            <person name="Raoult D."/>
        </authorList>
    </citation>
    <scope>NUCLEOTIDE SEQUENCE [LARGE SCALE GENOMIC DNA]</scope>
    <source>
        <strain>ESF-5</strain>
    </source>
</reference>